<comment type="function">
    <text>Essential role in cell cycle control. PP1 is perhaps required for exit from mitosis.</text>
</comment>
<comment type="catalytic activity">
    <reaction>
        <text>O-phospho-L-seryl-[protein] + H2O = L-seryl-[protein] + phosphate</text>
        <dbReference type="Rhea" id="RHEA:20629"/>
        <dbReference type="Rhea" id="RHEA-COMP:9863"/>
        <dbReference type="Rhea" id="RHEA-COMP:11604"/>
        <dbReference type="ChEBI" id="CHEBI:15377"/>
        <dbReference type="ChEBI" id="CHEBI:29999"/>
        <dbReference type="ChEBI" id="CHEBI:43474"/>
        <dbReference type="ChEBI" id="CHEBI:83421"/>
        <dbReference type="EC" id="3.1.3.16"/>
    </reaction>
</comment>
<comment type="catalytic activity">
    <reaction>
        <text>O-phospho-L-threonyl-[protein] + H2O = L-threonyl-[protein] + phosphate</text>
        <dbReference type="Rhea" id="RHEA:47004"/>
        <dbReference type="Rhea" id="RHEA-COMP:11060"/>
        <dbReference type="Rhea" id="RHEA-COMP:11605"/>
        <dbReference type="ChEBI" id="CHEBI:15377"/>
        <dbReference type="ChEBI" id="CHEBI:30013"/>
        <dbReference type="ChEBI" id="CHEBI:43474"/>
        <dbReference type="ChEBI" id="CHEBI:61977"/>
        <dbReference type="EC" id="3.1.3.16"/>
    </reaction>
</comment>
<comment type="cofactor">
    <cofactor evidence="1">
        <name>Mn(2+)</name>
        <dbReference type="ChEBI" id="CHEBI:29035"/>
    </cofactor>
    <text evidence="1">Binds 2 manganese ions per subunit.</text>
</comment>
<comment type="similarity">
    <text evidence="3">Belongs to the PPP phosphatase family. PP-1 subfamily.</text>
</comment>
<reference key="1">
    <citation type="journal article" date="1989" name="Cell">
        <title>The fission yeast dis2+ gene required for chromosome disjoining encodes one of two putative type 1 protein phosphatases.</title>
        <authorList>
            <person name="Ohkura H."/>
            <person name="Kinoshita N."/>
            <person name="Miyatani S."/>
            <person name="Toda T."/>
            <person name="Yanagida M."/>
        </authorList>
    </citation>
    <scope>NUCLEOTIDE SEQUENCE [GENOMIC DNA]</scope>
</reference>
<reference key="2">
    <citation type="journal article" date="2002" name="Nature">
        <title>The genome sequence of Schizosaccharomyces pombe.</title>
        <authorList>
            <person name="Wood V."/>
            <person name="Gwilliam R."/>
            <person name="Rajandream M.A."/>
            <person name="Lyne M.H."/>
            <person name="Lyne R."/>
            <person name="Stewart A."/>
            <person name="Sgouros J.G."/>
            <person name="Peat N."/>
            <person name="Hayles J."/>
            <person name="Baker S.G."/>
            <person name="Basham D."/>
            <person name="Bowman S."/>
            <person name="Brooks K."/>
            <person name="Brown D."/>
            <person name="Brown S."/>
            <person name="Chillingworth T."/>
            <person name="Churcher C.M."/>
            <person name="Collins M."/>
            <person name="Connor R."/>
            <person name="Cronin A."/>
            <person name="Davis P."/>
            <person name="Feltwell T."/>
            <person name="Fraser A."/>
            <person name="Gentles S."/>
            <person name="Goble A."/>
            <person name="Hamlin N."/>
            <person name="Harris D.E."/>
            <person name="Hidalgo J."/>
            <person name="Hodgson G."/>
            <person name="Holroyd S."/>
            <person name="Hornsby T."/>
            <person name="Howarth S."/>
            <person name="Huckle E.J."/>
            <person name="Hunt S."/>
            <person name="Jagels K."/>
            <person name="James K.D."/>
            <person name="Jones L."/>
            <person name="Jones M."/>
            <person name="Leather S."/>
            <person name="McDonald S."/>
            <person name="McLean J."/>
            <person name="Mooney P."/>
            <person name="Moule S."/>
            <person name="Mungall K.L."/>
            <person name="Murphy L.D."/>
            <person name="Niblett D."/>
            <person name="Odell C."/>
            <person name="Oliver K."/>
            <person name="O'Neil S."/>
            <person name="Pearson D."/>
            <person name="Quail M.A."/>
            <person name="Rabbinowitsch E."/>
            <person name="Rutherford K.M."/>
            <person name="Rutter S."/>
            <person name="Saunders D."/>
            <person name="Seeger K."/>
            <person name="Sharp S."/>
            <person name="Skelton J."/>
            <person name="Simmonds M.N."/>
            <person name="Squares R."/>
            <person name="Squares S."/>
            <person name="Stevens K."/>
            <person name="Taylor K."/>
            <person name="Taylor R.G."/>
            <person name="Tivey A."/>
            <person name="Walsh S.V."/>
            <person name="Warren T."/>
            <person name="Whitehead S."/>
            <person name="Woodward J.R."/>
            <person name="Volckaert G."/>
            <person name="Aert R."/>
            <person name="Robben J."/>
            <person name="Grymonprez B."/>
            <person name="Weltjens I."/>
            <person name="Vanstreels E."/>
            <person name="Rieger M."/>
            <person name="Schaefer M."/>
            <person name="Mueller-Auer S."/>
            <person name="Gabel C."/>
            <person name="Fuchs M."/>
            <person name="Duesterhoeft A."/>
            <person name="Fritzc C."/>
            <person name="Holzer E."/>
            <person name="Moestl D."/>
            <person name="Hilbert H."/>
            <person name="Borzym K."/>
            <person name="Langer I."/>
            <person name="Beck A."/>
            <person name="Lehrach H."/>
            <person name="Reinhardt R."/>
            <person name="Pohl T.M."/>
            <person name="Eger P."/>
            <person name="Zimmermann W."/>
            <person name="Wedler H."/>
            <person name="Wambutt R."/>
            <person name="Purnelle B."/>
            <person name="Goffeau A."/>
            <person name="Cadieu E."/>
            <person name="Dreano S."/>
            <person name="Gloux S."/>
            <person name="Lelaure V."/>
            <person name="Mottier S."/>
            <person name="Galibert F."/>
            <person name="Aves S.J."/>
            <person name="Xiang Z."/>
            <person name="Hunt C."/>
            <person name="Moore K."/>
            <person name="Hurst S.M."/>
            <person name="Lucas M."/>
            <person name="Rochet M."/>
            <person name="Gaillardin C."/>
            <person name="Tallada V.A."/>
            <person name="Garzon A."/>
            <person name="Thode G."/>
            <person name="Daga R.R."/>
            <person name="Cruzado L."/>
            <person name="Jimenez J."/>
            <person name="Sanchez M."/>
            <person name="del Rey F."/>
            <person name="Benito J."/>
            <person name="Dominguez A."/>
            <person name="Revuelta J.L."/>
            <person name="Moreno S."/>
            <person name="Armstrong J."/>
            <person name="Forsburg S.L."/>
            <person name="Cerutti L."/>
            <person name="Lowe T."/>
            <person name="McCombie W.R."/>
            <person name="Paulsen I."/>
            <person name="Potashkin J."/>
            <person name="Shpakovski G.V."/>
            <person name="Ussery D."/>
            <person name="Barrell B.G."/>
            <person name="Nurse P."/>
        </authorList>
    </citation>
    <scope>NUCLEOTIDE SEQUENCE [LARGE SCALE GENOMIC DNA]</scope>
    <source>
        <strain>972 / ATCC 24843</strain>
    </source>
</reference>
<accession>P23880</accession>
<evidence type="ECO:0000250" key="1"/>
<evidence type="ECO:0000256" key="2">
    <source>
        <dbReference type="SAM" id="MobiDB-lite"/>
    </source>
</evidence>
<evidence type="ECO:0000305" key="3"/>
<protein>
    <recommendedName>
        <fullName>Serine/threonine-protein phosphatase PP1-2</fullName>
        <ecNumber>3.1.3.16</ecNumber>
    </recommendedName>
    <alternativeName>
        <fullName>Suppressor protein SDS21</fullName>
    </alternativeName>
</protein>
<name>PP12_SCHPO</name>
<organism>
    <name type="scientific">Schizosaccharomyces pombe (strain 972 / ATCC 24843)</name>
    <name type="common">Fission yeast</name>
    <dbReference type="NCBI Taxonomy" id="284812"/>
    <lineage>
        <taxon>Eukaryota</taxon>
        <taxon>Fungi</taxon>
        <taxon>Dikarya</taxon>
        <taxon>Ascomycota</taxon>
        <taxon>Taphrinomycotina</taxon>
        <taxon>Schizosaccharomycetes</taxon>
        <taxon>Schizosaccharomycetales</taxon>
        <taxon>Schizosaccharomycetaceae</taxon>
        <taxon>Schizosaccharomyces</taxon>
    </lineage>
</organism>
<dbReference type="EC" id="3.1.3.16"/>
<dbReference type="EMBL" id="M27069">
    <property type="protein sequence ID" value="AAA35341.1"/>
    <property type="molecule type" value="Genomic_DNA"/>
</dbReference>
<dbReference type="EMBL" id="CU329672">
    <property type="protein sequence ID" value="CAA21222.1"/>
    <property type="molecule type" value="Genomic_DNA"/>
</dbReference>
<dbReference type="PIR" id="B32550">
    <property type="entry name" value="B32550"/>
</dbReference>
<dbReference type="RefSeq" id="NP_587898.1">
    <property type="nucleotide sequence ID" value="NM_001022890.2"/>
</dbReference>
<dbReference type="SMR" id="P23880"/>
<dbReference type="BioGRID" id="275750">
    <property type="interactions" value="15"/>
</dbReference>
<dbReference type="FunCoup" id="P23880">
    <property type="interactions" value="303"/>
</dbReference>
<dbReference type="STRING" id="284812.P23880"/>
<dbReference type="iPTMnet" id="P23880"/>
<dbReference type="PaxDb" id="4896-SPCC31H12.05c.1"/>
<dbReference type="EnsemblFungi" id="SPCC31H12.05c.1">
    <property type="protein sequence ID" value="SPCC31H12.05c.1:pep"/>
    <property type="gene ID" value="SPCC31H12.05c"/>
</dbReference>
<dbReference type="PomBase" id="SPCC31H12.05c">
    <property type="gene designation" value="sds21"/>
</dbReference>
<dbReference type="VEuPathDB" id="FungiDB:SPCC31H12.05c"/>
<dbReference type="eggNOG" id="KOG0374">
    <property type="taxonomic scope" value="Eukaryota"/>
</dbReference>
<dbReference type="HOGENOM" id="CLU_004962_8_1_1"/>
<dbReference type="InParanoid" id="P23880"/>
<dbReference type="OMA" id="GMNTGQT"/>
<dbReference type="PhylomeDB" id="P23880"/>
<dbReference type="PRO" id="PR:P23880"/>
<dbReference type="Proteomes" id="UP000002485">
    <property type="component" value="Chromosome III"/>
</dbReference>
<dbReference type="GO" id="GO:0000785">
    <property type="term" value="C:chromatin"/>
    <property type="evidence" value="ECO:0000314"/>
    <property type="project" value="PomBase"/>
</dbReference>
<dbReference type="GO" id="GO:0005737">
    <property type="term" value="C:cytoplasm"/>
    <property type="evidence" value="ECO:0000318"/>
    <property type="project" value="GO_Central"/>
</dbReference>
<dbReference type="GO" id="GO:0005730">
    <property type="term" value="C:nucleolus"/>
    <property type="evidence" value="ECO:0000314"/>
    <property type="project" value="PomBase"/>
</dbReference>
<dbReference type="GO" id="GO:0005634">
    <property type="term" value="C:nucleus"/>
    <property type="evidence" value="ECO:0007005"/>
    <property type="project" value="PomBase"/>
</dbReference>
<dbReference type="GO" id="GO:0000164">
    <property type="term" value="C:protein phosphatase type 1 complex"/>
    <property type="evidence" value="ECO:0000353"/>
    <property type="project" value="PomBase"/>
</dbReference>
<dbReference type="GO" id="GO:0072357">
    <property type="term" value="C:PTW/PP1 phosphatase complex"/>
    <property type="evidence" value="ECO:0000353"/>
    <property type="project" value="PomBase"/>
</dbReference>
<dbReference type="GO" id="GO:0046872">
    <property type="term" value="F:metal ion binding"/>
    <property type="evidence" value="ECO:0007669"/>
    <property type="project" value="UniProtKB-KW"/>
</dbReference>
<dbReference type="GO" id="GO:0004722">
    <property type="term" value="F:protein serine/threonine phosphatase activity"/>
    <property type="evidence" value="ECO:0000315"/>
    <property type="project" value="PomBase"/>
</dbReference>
<dbReference type="GO" id="GO:0051301">
    <property type="term" value="P:cell division"/>
    <property type="evidence" value="ECO:0007669"/>
    <property type="project" value="UniProtKB-KW"/>
</dbReference>
<dbReference type="GO" id="GO:0007059">
    <property type="term" value="P:chromosome segregation"/>
    <property type="evidence" value="ECO:0000318"/>
    <property type="project" value="GO_Central"/>
</dbReference>
<dbReference type="GO" id="GO:2000784">
    <property type="term" value="P:positive regulation of establishment of cell polarity regulating cell shape"/>
    <property type="evidence" value="ECO:0000269"/>
    <property type="project" value="PomBase"/>
</dbReference>
<dbReference type="GO" id="GO:0007346">
    <property type="term" value="P:regulation of mitotic cell cycle"/>
    <property type="evidence" value="ECO:0000318"/>
    <property type="project" value="GO_Central"/>
</dbReference>
<dbReference type="GO" id="GO:0023052">
    <property type="term" value="P:signaling"/>
    <property type="evidence" value="ECO:0000303"/>
    <property type="project" value="PomBase"/>
</dbReference>
<dbReference type="CDD" id="cd07414">
    <property type="entry name" value="MPP_PP1_PPKL"/>
    <property type="match status" value="1"/>
</dbReference>
<dbReference type="FunFam" id="3.60.21.10:FF:000004">
    <property type="entry name" value="Serine/threonine-protein phosphatase"/>
    <property type="match status" value="1"/>
</dbReference>
<dbReference type="Gene3D" id="3.60.21.10">
    <property type="match status" value="1"/>
</dbReference>
<dbReference type="InterPro" id="IPR004843">
    <property type="entry name" value="Calcineurin-like_PHP_ApaH"/>
</dbReference>
<dbReference type="InterPro" id="IPR029052">
    <property type="entry name" value="Metallo-depent_PP-like"/>
</dbReference>
<dbReference type="InterPro" id="IPR050341">
    <property type="entry name" value="PP1_catalytic_subunit"/>
</dbReference>
<dbReference type="InterPro" id="IPR006186">
    <property type="entry name" value="Ser/Thr-sp_prot-phosphatase"/>
</dbReference>
<dbReference type="InterPro" id="IPR031675">
    <property type="entry name" value="STPPase_N"/>
</dbReference>
<dbReference type="PANTHER" id="PTHR11668">
    <property type="entry name" value="SERINE/THREONINE PROTEIN PHOSPHATASE"/>
    <property type="match status" value="1"/>
</dbReference>
<dbReference type="PANTHER" id="PTHR11668:SF300">
    <property type="entry name" value="SERINE_THREONINE-PROTEIN PHOSPHATASE"/>
    <property type="match status" value="1"/>
</dbReference>
<dbReference type="Pfam" id="PF00149">
    <property type="entry name" value="Metallophos"/>
    <property type="match status" value="1"/>
</dbReference>
<dbReference type="Pfam" id="PF16891">
    <property type="entry name" value="STPPase_N"/>
    <property type="match status" value="1"/>
</dbReference>
<dbReference type="PRINTS" id="PR00114">
    <property type="entry name" value="STPHPHTASE"/>
</dbReference>
<dbReference type="SMART" id="SM00156">
    <property type="entry name" value="PP2Ac"/>
    <property type="match status" value="1"/>
</dbReference>
<dbReference type="SUPFAM" id="SSF56300">
    <property type="entry name" value="Metallo-dependent phosphatases"/>
    <property type="match status" value="1"/>
</dbReference>
<dbReference type="PROSITE" id="PS00125">
    <property type="entry name" value="SER_THR_PHOSPHATASE"/>
    <property type="match status" value="1"/>
</dbReference>
<feature type="chain" id="PRO_0000058819" description="Serine/threonine-protein phosphatase PP1-2">
    <location>
        <begin position="1"/>
        <end position="322"/>
    </location>
</feature>
<feature type="region of interest" description="Disordered" evidence="2">
    <location>
        <begin position="298"/>
        <end position="322"/>
    </location>
</feature>
<feature type="compositionally biased region" description="Polar residues" evidence="2">
    <location>
        <begin position="301"/>
        <end position="316"/>
    </location>
</feature>
<feature type="active site" description="Proton donor" evidence="1">
    <location>
        <position position="121"/>
    </location>
</feature>
<feature type="binding site" evidence="1">
    <location>
        <position position="60"/>
    </location>
    <ligand>
        <name>Mn(2+)</name>
        <dbReference type="ChEBI" id="CHEBI:29035"/>
        <label>1</label>
    </ligand>
</feature>
<feature type="binding site" evidence="1">
    <location>
        <position position="62"/>
    </location>
    <ligand>
        <name>Mn(2+)</name>
        <dbReference type="ChEBI" id="CHEBI:29035"/>
        <label>1</label>
    </ligand>
</feature>
<feature type="binding site" evidence="1">
    <location>
        <position position="88"/>
    </location>
    <ligand>
        <name>Mn(2+)</name>
        <dbReference type="ChEBI" id="CHEBI:29035"/>
        <label>1</label>
    </ligand>
</feature>
<feature type="binding site" evidence="1">
    <location>
        <position position="88"/>
    </location>
    <ligand>
        <name>Mn(2+)</name>
        <dbReference type="ChEBI" id="CHEBI:29035"/>
        <label>2</label>
    </ligand>
</feature>
<feature type="binding site" evidence="1">
    <location>
        <position position="120"/>
    </location>
    <ligand>
        <name>Mn(2+)</name>
        <dbReference type="ChEBI" id="CHEBI:29035"/>
        <label>2</label>
    </ligand>
</feature>
<feature type="binding site" evidence="1">
    <location>
        <position position="169"/>
    </location>
    <ligand>
        <name>Mn(2+)</name>
        <dbReference type="ChEBI" id="CHEBI:29035"/>
        <label>2</label>
    </ligand>
</feature>
<feature type="binding site" evidence="1">
    <location>
        <position position="244"/>
    </location>
    <ligand>
        <name>Mn(2+)</name>
        <dbReference type="ChEBI" id="CHEBI:29035"/>
        <label>2</label>
    </ligand>
</feature>
<sequence length="322" mass="36829">MDYDIDAIIEKLVKARNGKPSKQVQLSDAEIRYLCTTSRSIFLSQPMLLELEAPLKICGDIHGQYSDLLRLFEYGGYPPDANYLFLGDYVDRGKQSLEVICLLFAYKIKYPENFFLLRGNHEFASINRIYGFYDECKRRYSIKLWKTFTDCFNCMPVAAVIDEKIFCMHGGLSPDLNSLDQIQRIIRPTDIPDTGLLCDLVWSDPEKDLTGWGENDRGVSYTFGADVVSRFLQKHDLDLICRAHQVVEDGYEFFGKRQLVTIFSAPNYCGEFDNVGAMMSVNEDLLCSFQILKPAEKRQRVSQSSIKESKSATNSLKKSKNN</sequence>
<gene>
    <name type="primary">sds21</name>
    <name type="ORF">SPCC31H12.05c</name>
</gene>
<keyword id="KW-0131">Cell cycle</keyword>
<keyword id="KW-0132">Cell division</keyword>
<keyword id="KW-0378">Hydrolase</keyword>
<keyword id="KW-0464">Manganese</keyword>
<keyword id="KW-0479">Metal-binding</keyword>
<keyword id="KW-0498">Mitosis</keyword>
<keyword id="KW-0904">Protein phosphatase</keyword>
<keyword id="KW-1185">Reference proteome</keyword>
<proteinExistence type="inferred from homology"/>